<comment type="function">
    <text evidence="1 2 3">Regulatory component of the Usp12-46 deubiquitylase complex (By similarity). activates deubiquitination by increasing the catalytic turnover without increasing the affinity of deubiquitinating enzymes for the substrate (By similarity). The complex deubiquitylates the wg/wingless-signaling receptor arr/arrow, which stabilizes the receptor and increases its concentration at the cell surface; this enhances the sensitivity of cells to wg/wingless-signal stimulation. This increases the amplitude and spatial range of the signaling response to the wg/wingless morphogen gradient, facilitating the precise concentration-dependent regulation of its target genes. Together with Wdr20 and Usp12-46 required for wg/wingless-mediated signaling in the wing imaginal disc and for wg/wingless-dependent regulation of intestinal stem cell proliferation (By similarity).</text>
</comment>
<comment type="subunit">
    <text evidence="2">Catalytic component of the Usp12-46 deubiquitylase complex consisting of Usp12-46, Wdr20 and Uaf1; regulatory subunit that, together wtih Wdr20, stabilizes Usp12-46. The Usp12-46 deubiquitylase complex associates with arr/arrow; the interaction leads to deubiquitination and stabilization of arr/arrow.</text>
</comment>
<comment type="similarity">
    <text evidence="6">Belongs to the WD repeat WDR48 family.</text>
</comment>
<dbReference type="EMBL" id="CH479183">
    <property type="protein sequence ID" value="EDW36310.1"/>
    <property type="molecule type" value="Genomic_DNA"/>
</dbReference>
<dbReference type="SMR" id="B4GIJ0"/>
<dbReference type="STRING" id="7234.B4GIJ0"/>
<dbReference type="EnsemblMetazoa" id="FBtr0182360">
    <property type="protein sequence ID" value="FBpp0180852"/>
    <property type="gene ID" value="FBgn0154349"/>
</dbReference>
<dbReference type="EnsemblMetazoa" id="XM_002018435.2">
    <property type="protein sequence ID" value="XP_002018471.1"/>
    <property type="gene ID" value="LOC6593059"/>
</dbReference>
<dbReference type="GeneID" id="6593059"/>
<dbReference type="KEGG" id="dpe:6593059"/>
<dbReference type="eggNOG" id="KOG0308">
    <property type="taxonomic scope" value="Eukaryota"/>
</dbReference>
<dbReference type="HOGENOM" id="CLU_014960_0_1_1"/>
<dbReference type="OMA" id="IRHYHIL"/>
<dbReference type="OrthoDB" id="2421129at2759"/>
<dbReference type="PhylomeDB" id="B4GIJ0"/>
<dbReference type="Proteomes" id="UP000008744">
    <property type="component" value="Unassembled WGS sequence"/>
</dbReference>
<dbReference type="GO" id="GO:0043130">
    <property type="term" value="F:ubiquitin binding"/>
    <property type="evidence" value="ECO:0007669"/>
    <property type="project" value="TreeGrafter"/>
</dbReference>
<dbReference type="GO" id="GO:0000724">
    <property type="term" value="P:double-strand break repair via homologous recombination"/>
    <property type="evidence" value="ECO:0007669"/>
    <property type="project" value="TreeGrafter"/>
</dbReference>
<dbReference type="CDD" id="cd17041">
    <property type="entry name" value="Ubl_WDR48"/>
    <property type="match status" value="1"/>
</dbReference>
<dbReference type="CDD" id="cd00200">
    <property type="entry name" value="WD40"/>
    <property type="match status" value="1"/>
</dbReference>
<dbReference type="FunFam" id="2.130.10.10:FF:000543">
    <property type="entry name" value="WD repeat-containing protein 48 homolog"/>
    <property type="match status" value="1"/>
</dbReference>
<dbReference type="FunFam" id="2.130.10.10:FF:000984">
    <property type="entry name" value="WD repeat-containing protein 48 homolog"/>
    <property type="match status" value="1"/>
</dbReference>
<dbReference type="Gene3D" id="2.130.10.10">
    <property type="entry name" value="YVTN repeat-like/Quinoprotein amine dehydrogenase"/>
    <property type="match status" value="2"/>
</dbReference>
<dbReference type="InterPro" id="IPR020472">
    <property type="entry name" value="G-protein_beta_WD-40_rep"/>
</dbReference>
<dbReference type="InterPro" id="IPR015943">
    <property type="entry name" value="WD40/YVTN_repeat-like_dom_sf"/>
</dbReference>
<dbReference type="InterPro" id="IPR019775">
    <property type="entry name" value="WD40_repeat_CS"/>
</dbReference>
<dbReference type="InterPro" id="IPR036322">
    <property type="entry name" value="WD40_repeat_dom_sf"/>
</dbReference>
<dbReference type="InterPro" id="IPR001680">
    <property type="entry name" value="WD40_rpt"/>
</dbReference>
<dbReference type="InterPro" id="IPR051246">
    <property type="entry name" value="WDR48"/>
</dbReference>
<dbReference type="InterPro" id="IPR021772">
    <property type="entry name" value="WDR48/Bun107"/>
</dbReference>
<dbReference type="PANTHER" id="PTHR19862">
    <property type="entry name" value="WD REPEAT-CONTAINING PROTEIN 48"/>
    <property type="match status" value="1"/>
</dbReference>
<dbReference type="PANTHER" id="PTHR19862:SF14">
    <property type="entry name" value="WD REPEAT-CONTAINING PROTEIN 48"/>
    <property type="match status" value="1"/>
</dbReference>
<dbReference type="Pfam" id="PF11816">
    <property type="entry name" value="DUF3337"/>
    <property type="match status" value="1"/>
</dbReference>
<dbReference type="Pfam" id="PF00400">
    <property type="entry name" value="WD40"/>
    <property type="match status" value="6"/>
</dbReference>
<dbReference type="PRINTS" id="PR00320">
    <property type="entry name" value="GPROTEINBRPT"/>
</dbReference>
<dbReference type="SMART" id="SM00320">
    <property type="entry name" value="WD40"/>
    <property type="match status" value="8"/>
</dbReference>
<dbReference type="SUPFAM" id="SSF50978">
    <property type="entry name" value="WD40 repeat-like"/>
    <property type="match status" value="1"/>
</dbReference>
<dbReference type="PROSITE" id="PS00678">
    <property type="entry name" value="WD_REPEATS_1"/>
    <property type="match status" value="4"/>
</dbReference>
<dbReference type="PROSITE" id="PS50082">
    <property type="entry name" value="WD_REPEATS_2"/>
    <property type="match status" value="5"/>
</dbReference>
<dbReference type="PROSITE" id="PS50294">
    <property type="entry name" value="WD_REPEATS_REGION"/>
    <property type="match status" value="5"/>
</dbReference>
<evidence type="ECO:0000250" key="1"/>
<evidence type="ECO:0000250" key="2">
    <source>
        <dbReference type="UniProtKB" id="Q1LZ08"/>
    </source>
</evidence>
<evidence type="ECO:0000250" key="3">
    <source>
        <dbReference type="UniProtKB" id="Q8TAF3"/>
    </source>
</evidence>
<evidence type="ECO:0000255" key="4"/>
<evidence type="ECO:0000256" key="5">
    <source>
        <dbReference type="SAM" id="MobiDB-lite"/>
    </source>
</evidence>
<evidence type="ECO:0000305" key="6"/>
<evidence type="ECO:0000312" key="7">
    <source>
        <dbReference type="Proteomes" id="UP000008744"/>
    </source>
</evidence>
<organism evidence="7">
    <name type="scientific">Drosophila persimilis</name>
    <name type="common">Fruit fly</name>
    <dbReference type="NCBI Taxonomy" id="7234"/>
    <lineage>
        <taxon>Eukaryota</taxon>
        <taxon>Metazoa</taxon>
        <taxon>Ecdysozoa</taxon>
        <taxon>Arthropoda</taxon>
        <taxon>Hexapoda</taxon>
        <taxon>Insecta</taxon>
        <taxon>Pterygota</taxon>
        <taxon>Neoptera</taxon>
        <taxon>Endopterygota</taxon>
        <taxon>Diptera</taxon>
        <taxon>Brachycera</taxon>
        <taxon>Muscomorpha</taxon>
        <taxon>Ephydroidea</taxon>
        <taxon>Drosophilidae</taxon>
        <taxon>Drosophila</taxon>
        <taxon>Sophophora</taxon>
    </lineage>
</organism>
<reference key="1">
    <citation type="journal article" date="2007" name="Nature">
        <title>Evolution of genes and genomes on the Drosophila phylogeny.</title>
        <authorList>
            <consortium name="Drosophila 12 genomes consortium"/>
        </authorList>
    </citation>
    <scope>NUCLEOTIDE SEQUENCE [LARGE SCALE GENOMIC DNA]</scope>
    <source>
        <strain>MSH-3 / Tucson 14011-0111.49</strain>
    </source>
</reference>
<name>WDR48_DROPE</name>
<protein>
    <recommendedName>
        <fullName>WD repeat-containing protein 48 homolog</fullName>
    </recommendedName>
</protein>
<gene>
    <name evidence="2" type="primary">Uaf1</name>
    <name type="ORF">GL16745</name>
</gene>
<feature type="chain" id="PRO_0000378983" description="WD repeat-containing protein 48 homolog">
    <location>
        <begin position="1"/>
        <end position="680"/>
    </location>
</feature>
<feature type="repeat" description="WD 1" evidence="4">
    <location>
        <begin position="26"/>
        <end position="65"/>
    </location>
</feature>
<feature type="repeat" description="WD 2" evidence="4">
    <location>
        <begin position="71"/>
        <end position="110"/>
    </location>
</feature>
<feature type="repeat" description="WD 3" evidence="4">
    <location>
        <begin position="113"/>
        <end position="152"/>
    </location>
</feature>
<feature type="repeat" description="WD 4" evidence="4">
    <location>
        <begin position="164"/>
        <end position="203"/>
    </location>
</feature>
<feature type="repeat" description="WD 5" evidence="4">
    <location>
        <begin position="206"/>
        <end position="245"/>
    </location>
</feature>
<feature type="repeat" description="WD 6" evidence="4">
    <location>
        <begin position="248"/>
        <end position="287"/>
    </location>
</feature>
<feature type="repeat" description="WD 7" evidence="4">
    <location>
        <begin position="290"/>
        <end position="329"/>
    </location>
</feature>
<feature type="repeat" description="WD 8" evidence="4">
    <location>
        <begin position="350"/>
        <end position="389"/>
    </location>
</feature>
<feature type="region of interest" description="Disordered" evidence="5">
    <location>
        <begin position="594"/>
        <end position="618"/>
    </location>
</feature>
<feature type="compositionally biased region" description="Low complexity" evidence="5">
    <location>
        <begin position="596"/>
        <end position="609"/>
    </location>
</feature>
<keyword id="KW-1185">Reference proteome</keyword>
<keyword id="KW-0677">Repeat</keyword>
<keyword id="KW-0833">Ubl conjugation pathway</keyword>
<keyword id="KW-0853">WD repeat</keyword>
<proteinExistence type="inferred from homology"/>
<accession>B4GIJ0</accession>
<sequence length="680" mass="76545">MLTHKTCQARKKMQVSFVIRDAEEKQHRNGVNSLQLDPNNGKLYSAGRDAIIRVWNTRSESSEKYIQSMEHHNDWVNDIVLCCNGRNLISASCDTTVKVWNAQKGFCMSTLRTHRDYVQALAYAKDREQVASAGLDKAIFLWDVNTLTALTASNNTVTTSSLTGSKDSIYSLAMNPSGTVIVSGSTENILRIWDPRTCMRSMKLRGHTENVRCLVVSPDGNQVVSGSSDGTIKVWNLGQQRCVQTIHVHKEGVWSLLMSENFQYIISGSRDQNIIVTEMRNPSNKTLVCEEKAPVLSLGYNMDKTGVWATTWNSDIRCWKLPMYDRGTLNSSGGLDAQWTQGGTELACIKGGAAIKECTVLNDKRYILTKDSQDQVVLYDVLRVVKKDTLGPIDYEAEVKKRNKQVYIPNWFTVDLKTGMPTIVLGQEEVDCFSAWVSIEAGLPECVDPTTEIKINYGKLLLEALLEYWTPPHSIPQNELEPDMHGNGYFQVPKHTPVIFSEVGGRTVCRLLVRDAAGDSECTLLHETAPQWVTDVVIEKNIPKFLKIPFFLQPHPQMTKPERTKKDRLVANEFIQCRKVCEHVLEKVLNAETTPSGANANNSLQNSQSDGNSEGSQLPAEERIELSCNDVVVDPNMDLRTVRHFIWKQSTDLTFQYKTKQNFNYDGSIGDSLERVTRKY</sequence>